<dbReference type="EC" id="1.11.1.21" evidence="1"/>
<dbReference type="EMBL" id="AM490531">
    <property type="protein sequence ID" value="CAM32626.1"/>
    <property type="molecule type" value="Genomic_DNA"/>
</dbReference>
<dbReference type="RefSeq" id="WP_013233264.1">
    <property type="nucleotide sequence ID" value="NZ_JWZZ01000023.1"/>
</dbReference>
<dbReference type="SMR" id="A2RPW9"/>
<dbReference type="GeneID" id="29389902"/>
<dbReference type="KEGG" id="hsz:ACP92_06240"/>
<dbReference type="PATRIC" id="fig|964.11.peg.1307"/>
<dbReference type="OMA" id="GPETTWL"/>
<dbReference type="GO" id="GO:0005829">
    <property type="term" value="C:cytosol"/>
    <property type="evidence" value="ECO:0007669"/>
    <property type="project" value="TreeGrafter"/>
</dbReference>
<dbReference type="GO" id="GO:0004096">
    <property type="term" value="F:catalase activity"/>
    <property type="evidence" value="ECO:0007669"/>
    <property type="project" value="UniProtKB-UniRule"/>
</dbReference>
<dbReference type="GO" id="GO:0020037">
    <property type="term" value="F:heme binding"/>
    <property type="evidence" value="ECO:0007669"/>
    <property type="project" value="InterPro"/>
</dbReference>
<dbReference type="GO" id="GO:0046872">
    <property type="term" value="F:metal ion binding"/>
    <property type="evidence" value="ECO:0007669"/>
    <property type="project" value="UniProtKB-KW"/>
</dbReference>
<dbReference type="GO" id="GO:0070301">
    <property type="term" value="P:cellular response to hydrogen peroxide"/>
    <property type="evidence" value="ECO:0007669"/>
    <property type="project" value="TreeGrafter"/>
</dbReference>
<dbReference type="GO" id="GO:0042744">
    <property type="term" value="P:hydrogen peroxide catabolic process"/>
    <property type="evidence" value="ECO:0007669"/>
    <property type="project" value="UniProtKB-KW"/>
</dbReference>
<dbReference type="CDD" id="cd00649">
    <property type="entry name" value="catalase_peroxidase_1"/>
    <property type="match status" value="1"/>
</dbReference>
<dbReference type="CDD" id="cd08200">
    <property type="entry name" value="catalase_peroxidase_2"/>
    <property type="match status" value="1"/>
</dbReference>
<dbReference type="FunFam" id="1.10.420.10:FF:000002">
    <property type="entry name" value="Catalase-peroxidase"/>
    <property type="match status" value="1"/>
</dbReference>
<dbReference type="FunFam" id="1.10.420.10:FF:000004">
    <property type="entry name" value="Catalase-peroxidase"/>
    <property type="match status" value="1"/>
</dbReference>
<dbReference type="FunFam" id="1.10.520.10:FF:000002">
    <property type="entry name" value="Catalase-peroxidase"/>
    <property type="match status" value="1"/>
</dbReference>
<dbReference type="Gene3D" id="1.10.520.10">
    <property type="match status" value="2"/>
</dbReference>
<dbReference type="Gene3D" id="1.10.420.10">
    <property type="entry name" value="Peroxidase, domain 2"/>
    <property type="match status" value="2"/>
</dbReference>
<dbReference type="HAMAP" id="MF_01961">
    <property type="entry name" value="Catal_peroxid"/>
    <property type="match status" value="1"/>
</dbReference>
<dbReference type="InterPro" id="IPR000763">
    <property type="entry name" value="Catalase_peroxidase"/>
</dbReference>
<dbReference type="InterPro" id="IPR002016">
    <property type="entry name" value="Haem_peroxidase"/>
</dbReference>
<dbReference type="InterPro" id="IPR010255">
    <property type="entry name" value="Haem_peroxidase_sf"/>
</dbReference>
<dbReference type="InterPro" id="IPR019794">
    <property type="entry name" value="Peroxidases_AS"/>
</dbReference>
<dbReference type="InterPro" id="IPR019793">
    <property type="entry name" value="Peroxidases_heam-ligand_BS"/>
</dbReference>
<dbReference type="NCBIfam" id="TIGR00198">
    <property type="entry name" value="cat_per_HPI"/>
    <property type="match status" value="1"/>
</dbReference>
<dbReference type="NCBIfam" id="NF011635">
    <property type="entry name" value="PRK15061.1"/>
    <property type="match status" value="1"/>
</dbReference>
<dbReference type="PANTHER" id="PTHR30555:SF0">
    <property type="entry name" value="CATALASE-PEROXIDASE"/>
    <property type="match status" value="1"/>
</dbReference>
<dbReference type="PANTHER" id="PTHR30555">
    <property type="entry name" value="HYDROPEROXIDASE I, BIFUNCTIONAL CATALASE-PEROXIDASE"/>
    <property type="match status" value="1"/>
</dbReference>
<dbReference type="Pfam" id="PF00141">
    <property type="entry name" value="peroxidase"/>
    <property type="match status" value="2"/>
</dbReference>
<dbReference type="PRINTS" id="PR00460">
    <property type="entry name" value="BPEROXIDASE"/>
</dbReference>
<dbReference type="PRINTS" id="PR00458">
    <property type="entry name" value="PEROXIDASE"/>
</dbReference>
<dbReference type="SUPFAM" id="SSF48113">
    <property type="entry name" value="Heme-dependent peroxidases"/>
    <property type="match status" value="2"/>
</dbReference>
<dbReference type="PROSITE" id="PS00435">
    <property type="entry name" value="PEROXIDASE_1"/>
    <property type="match status" value="1"/>
</dbReference>
<dbReference type="PROSITE" id="PS00436">
    <property type="entry name" value="PEROXIDASE_2"/>
    <property type="match status" value="1"/>
</dbReference>
<dbReference type="PROSITE" id="PS50873">
    <property type="entry name" value="PEROXIDASE_4"/>
    <property type="match status" value="2"/>
</dbReference>
<accession>A2RPW9</accession>
<comment type="function">
    <text evidence="1">Bifunctional enzyme with both catalase and broad-spectrum peroxidase activity.</text>
</comment>
<comment type="catalytic activity">
    <reaction evidence="1">
        <text>H2O2 + AH2 = A + 2 H2O</text>
        <dbReference type="Rhea" id="RHEA:30275"/>
        <dbReference type="ChEBI" id="CHEBI:13193"/>
        <dbReference type="ChEBI" id="CHEBI:15377"/>
        <dbReference type="ChEBI" id="CHEBI:16240"/>
        <dbReference type="ChEBI" id="CHEBI:17499"/>
        <dbReference type="EC" id="1.11.1.21"/>
    </reaction>
</comment>
<comment type="catalytic activity">
    <reaction evidence="1">
        <text>2 H2O2 = O2 + 2 H2O</text>
        <dbReference type="Rhea" id="RHEA:20309"/>
        <dbReference type="ChEBI" id="CHEBI:15377"/>
        <dbReference type="ChEBI" id="CHEBI:15379"/>
        <dbReference type="ChEBI" id="CHEBI:16240"/>
        <dbReference type="EC" id="1.11.1.21"/>
    </reaction>
</comment>
<comment type="cofactor">
    <cofactor evidence="1">
        <name>heme b</name>
        <dbReference type="ChEBI" id="CHEBI:60344"/>
    </cofactor>
    <text evidence="1">Binds 1 heme b (iron(II)-protoporphyrin IX) group per dimer.</text>
</comment>
<comment type="subunit">
    <text evidence="1">Homodimer or homotetramer.</text>
</comment>
<comment type="PTM">
    <text evidence="1">Formation of the three residue Trp-Tyr-Met cross-link is important for the catalase, but not the peroxidase activity of the enzyme.</text>
</comment>
<comment type="similarity">
    <text evidence="1">Belongs to the peroxidase family. Peroxidase/catalase subfamily.</text>
</comment>
<evidence type="ECO:0000255" key="1">
    <source>
        <dbReference type="HAMAP-Rule" id="MF_01961"/>
    </source>
</evidence>
<evidence type="ECO:0000256" key="2">
    <source>
        <dbReference type="SAM" id="MobiDB-lite"/>
    </source>
</evidence>
<gene>
    <name evidence="1" type="primary">katG</name>
</gene>
<keyword id="KW-0349">Heme</keyword>
<keyword id="KW-0376">Hydrogen peroxide</keyword>
<keyword id="KW-0408">Iron</keyword>
<keyword id="KW-0479">Metal-binding</keyword>
<keyword id="KW-0560">Oxidoreductase</keyword>
<keyword id="KW-0575">Peroxidase</keyword>
<feature type="chain" id="PRO_0000354808" description="Catalase-peroxidase">
    <location>
        <begin position="1"/>
        <end position="748"/>
    </location>
</feature>
<feature type="region of interest" description="Disordered" evidence="2">
    <location>
        <begin position="194"/>
        <end position="223"/>
    </location>
</feature>
<feature type="region of interest" description="Disordered" evidence="2">
    <location>
        <begin position="288"/>
        <end position="310"/>
    </location>
</feature>
<feature type="compositionally biased region" description="Basic and acidic residues" evidence="2">
    <location>
        <begin position="290"/>
        <end position="301"/>
    </location>
</feature>
<feature type="active site" description="Proton acceptor" evidence="1">
    <location>
        <position position="92"/>
    </location>
</feature>
<feature type="binding site" description="axial binding residue" evidence="1">
    <location>
        <position position="283"/>
    </location>
    <ligand>
        <name>heme b</name>
        <dbReference type="ChEBI" id="CHEBI:60344"/>
    </ligand>
    <ligandPart>
        <name>Fe</name>
        <dbReference type="ChEBI" id="CHEBI:18248"/>
    </ligandPart>
</feature>
<feature type="site" description="Transition state stabilizer" evidence="1">
    <location>
        <position position="88"/>
    </location>
</feature>
<feature type="cross-link" description="Tryptophyl-tyrosyl-methioninium (Trp-Tyr) (with M-268)" evidence="1">
    <location>
        <begin position="91"/>
        <end position="242"/>
    </location>
</feature>
<feature type="cross-link" description="Tryptophyl-tyrosyl-methioninium (Tyr-Met) (with W-91)" evidence="1">
    <location>
        <begin position="242"/>
        <end position="268"/>
    </location>
</feature>
<proteinExistence type="inferred from homology"/>
<sequence length="748" mass="81181">MSNEAKCPFNHTAGSGTSNRDWWPKQLRVDLLAQHSSKSNPMGEDFDYAEAFKSLDLAAVKADLAKVMTDSQDWWPADFGHYGPLFVRMAWHSAGTYRIGDGRGGAGRGQQRFAPLNSWPDNVNLDKARRLLWPVKQKYGNKISWADLLILTGNVALETMGFKTFGFAGGRADVWEPDLDVYWGTESTWLGGDDRYGKGKGSSSQGEIPADAHRHGQEQARTAPAGRNLENPLAAVQMGLIYVNPEGPEGNPDPLAAAHDIRETFARMAMDDEETVALIAGGHTFGKTHGAGDAKHVGREPEGEDMDSQGLGWKSSFGSGVGGDTISSGLEVTWTQTPAQWSNYFFENLFKYEWELTKSPAGAHQWVAKGADAVIPHAHGGAPLLPTMLTTDLSLRFDPAYEKISRRFLEHPEQFADAFARAWFKLTHRDLGPRSRYLGPEVPAEELIWQDPLPQAEGAQIDAADVAALKAKVLGSGLSVPELVATAWASASTFRGGDMRGGANGARIRLAPQKDWAANQPAQLAKVLKTLEGIQSAFNQGGKKVSLADLIVLAGSAAVEKAAQDAGVAVAVPFRAGRVDASQEQTDAASFAPLEPIVDGFRNFQKQRYAVRGEDMLIDKAQQLTLSAPEMTVLVGGLRVLGNNVGGSTKGMFTDRVGVLSNDFFVNLLDMATEWKSTSPAQEEFEGRDRKTGAVKWAGTRVDLVFGSNAVLRALAEVYASADAKEKFVKDFVAAWVKVMELDRFDLK</sequence>
<reference key="1">
    <citation type="submission" date="2007-02" db="EMBL/GenBank/DDBJ databases">
        <title>Genome sequence of the nitrogen fixing bacterium Herbaspirillum seropedicae.</title>
        <authorList>
            <person name="de Oliveira Pedrosa F."/>
        </authorList>
    </citation>
    <scope>NUCLEOTIDE SEQUENCE [GENOMIC DNA]</scope>
</reference>
<name>KATG_HERSE</name>
<organism>
    <name type="scientific">Herbaspirillum seropedicae</name>
    <dbReference type="NCBI Taxonomy" id="964"/>
    <lineage>
        <taxon>Bacteria</taxon>
        <taxon>Pseudomonadati</taxon>
        <taxon>Pseudomonadota</taxon>
        <taxon>Betaproteobacteria</taxon>
        <taxon>Burkholderiales</taxon>
        <taxon>Oxalobacteraceae</taxon>
        <taxon>Herbaspirillum</taxon>
    </lineage>
</organism>
<protein>
    <recommendedName>
        <fullName evidence="1">Catalase-peroxidase</fullName>
        <shortName evidence="1">CP</shortName>
        <ecNumber evidence="1">1.11.1.21</ecNumber>
    </recommendedName>
    <alternativeName>
        <fullName evidence="1">Peroxidase/catalase</fullName>
    </alternativeName>
</protein>